<sequence length="62" mass="6914">MAKVCYFTGRKTVSGNNRSHAMNQTKRTVKPNLQKVTILVDGKPKKVWASARALKSGKVERV</sequence>
<accession>B9DTK1</accession>
<name>RL28_STRU0</name>
<organism>
    <name type="scientific">Streptococcus uberis (strain ATCC BAA-854 / 0140J)</name>
    <dbReference type="NCBI Taxonomy" id="218495"/>
    <lineage>
        <taxon>Bacteria</taxon>
        <taxon>Bacillati</taxon>
        <taxon>Bacillota</taxon>
        <taxon>Bacilli</taxon>
        <taxon>Lactobacillales</taxon>
        <taxon>Streptococcaceae</taxon>
        <taxon>Streptococcus</taxon>
    </lineage>
</organism>
<comment type="similarity">
    <text evidence="1">Belongs to the bacterial ribosomal protein bL28 family.</text>
</comment>
<reference key="1">
    <citation type="journal article" date="2009" name="BMC Genomics">
        <title>Evidence for niche adaptation in the genome of the bovine pathogen Streptococcus uberis.</title>
        <authorList>
            <person name="Ward P.N."/>
            <person name="Holden M.T.G."/>
            <person name="Leigh J.A."/>
            <person name="Lennard N."/>
            <person name="Bignell A."/>
            <person name="Barron A."/>
            <person name="Clark L."/>
            <person name="Quail M.A."/>
            <person name="Woodward J."/>
            <person name="Barrell B.G."/>
            <person name="Egan S.A."/>
            <person name="Field T.R."/>
            <person name="Maskell D."/>
            <person name="Kehoe M."/>
            <person name="Dowson C.G."/>
            <person name="Chanter N."/>
            <person name="Whatmore A.M."/>
            <person name="Bentley S.D."/>
            <person name="Parkhill J."/>
        </authorList>
    </citation>
    <scope>NUCLEOTIDE SEQUENCE [LARGE SCALE GENOMIC DNA]</scope>
    <source>
        <strain>ATCC BAA-854 / 0140J</strain>
    </source>
</reference>
<dbReference type="EMBL" id="AM946015">
    <property type="protein sequence ID" value="CAR40906.1"/>
    <property type="molecule type" value="Genomic_DNA"/>
</dbReference>
<dbReference type="RefSeq" id="WP_003025909.1">
    <property type="nucleotide sequence ID" value="NC_012004.1"/>
</dbReference>
<dbReference type="SMR" id="B9DTK1"/>
<dbReference type="STRING" id="218495.SUB0331"/>
<dbReference type="GeneID" id="93963721"/>
<dbReference type="KEGG" id="sub:SUB0331"/>
<dbReference type="eggNOG" id="COG0227">
    <property type="taxonomic scope" value="Bacteria"/>
</dbReference>
<dbReference type="HOGENOM" id="CLU_064548_7_1_9"/>
<dbReference type="OrthoDB" id="9805609at2"/>
<dbReference type="Proteomes" id="UP000000449">
    <property type="component" value="Chromosome"/>
</dbReference>
<dbReference type="GO" id="GO:1990904">
    <property type="term" value="C:ribonucleoprotein complex"/>
    <property type="evidence" value="ECO:0007669"/>
    <property type="project" value="UniProtKB-KW"/>
</dbReference>
<dbReference type="GO" id="GO:0005840">
    <property type="term" value="C:ribosome"/>
    <property type="evidence" value="ECO:0007669"/>
    <property type="project" value="UniProtKB-KW"/>
</dbReference>
<dbReference type="GO" id="GO:0003735">
    <property type="term" value="F:structural constituent of ribosome"/>
    <property type="evidence" value="ECO:0007669"/>
    <property type="project" value="InterPro"/>
</dbReference>
<dbReference type="GO" id="GO:0006412">
    <property type="term" value="P:translation"/>
    <property type="evidence" value="ECO:0007669"/>
    <property type="project" value="UniProtKB-UniRule"/>
</dbReference>
<dbReference type="Gene3D" id="2.30.170.40">
    <property type="entry name" value="Ribosomal protein L28/L24"/>
    <property type="match status" value="1"/>
</dbReference>
<dbReference type="HAMAP" id="MF_00373">
    <property type="entry name" value="Ribosomal_bL28"/>
    <property type="match status" value="1"/>
</dbReference>
<dbReference type="InterPro" id="IPR050096">
    <property type="entry name" value="Bacterial_rp_bL28"/>
</dbReference>
<dbReference type="InterPro" id="IPR026569">
    <property type="entry name" value="Ribosomal_bL28"/>
</dbReference>
<dbReference type="InterPro" id="IPR034704">
    <property type="entry name" value="Ribosomal_bL28/bL31-like_sf"/>
</dbReference>
<dbReference type="InterPro" id="IPR001383">
    <property type="entry name" value="Ribosomal_bL28_bact-type"/>
</dbReference>
<dbReference type="InterPro" id="IPR037147">
    <property type="entry name" value="Ribosomal_bL28_sf"/>
</dbReference>
<dbReference type="NCBIfam" id="TIGR00009">
    <property type="entry name" value="L28"/>
    <property type="match status" value="1"/>
</dbReference>
<dbReference type="PANTHER" id="PTHR39080">
    <property type="entry name" value="50S RIBOSOMAL PROTEIN L28"/>
    <property type="match status" value="1"/>
</dbReference>
<dbReference type="PANTHER" id="PTHR39080:SF1">
    <property type="entry name" value="LARGE RIBOSOMAL SUBUNIT PROTEIN BL28A"/>
    <property type="match status" value="1"/>
</dbReference>
<dbReference type="Pfam" id="PF00830">
    <property type="entry name" value="Ribosomal_L28"/>
    <property type="match status" value="1"/>
</dbReference>
<dbReference type="SUPFAM" id="SSF143800">
    <property type="entry name" value="L28p-like"/>
    <property type="match status" value="1"/>
</dbReference>
<evidence type="ECO:0000255" key="1">
    <source>
        <dbReference type="HAMAP-Rule" id="MF_00373"/>
    </source>
</evidence>
<evidence type="ECO:0000305" key="2"/>
<gene>
    <name evidence="1" type="primary">rpmB</name>
    <name type="ordered locus">SUB0331</name>
</gene>
<proteinExistence type="inferred from homology"/>
<protein>
    <recommendedName>
        <fullName evidence="1">Large ribosomal subunit protein bL28</fullName>
    </recommendedName>
    <alternativeName>
        <fullName evidence="2">50S ribosomal protein L28</fullName>
    </alternativeName>
</protein>
<feature type="chain" id="PRO_1000195946" description="Large ribosomal subunit protein bL28">
    <location>
        <begin position="1"/>
        <end position="62"/>
    </location>
</feature>
<keyword id="KW-1185">Reference proteome</keyword>
<keyword id="KW-0687">Ribonucleoprotein</keyword>
<keyword id="KW-0689">Ribosomal protein</keyword>